<accession>B8M9K0</accession>
<protein>
    <recommendedName>
        <fullName evidence="4">Hydrolase tropI</fullName>
        <ecNumber evidence="3">3.1.1.-</ecNumber>
    </recommendedName>
    <alternativeName>
        <fullName evidence="5">Tropolone synthesis protein I</fullName>
    </alternativeName>
</protein>
<keyword id="KW-0378">Hydrolase</keyword>
<keyword id="KW-1185">Reference proteome</keyword>
<evidence type="ECO:0000250" key="1">
    <source>
        <dbReference type="UniProtKB" id="P0A114"/>
    </source>
</evidence>
<evidence type="ECO:0000269" key="2">
    <source>
    </source>
</evidence>
<evidence type="ECO:0000269" key="3">
    <source>
    </source>
</evidence>
<evidence type="ECO:0000303" key="4">
    <source>
    </source>
</evidence>
<evidence type="ECO:0000303" key="5">
    <source>
    </source>
</evidence>
<evidence type="ECO:0000305" key="6"/>
<organism>
    <name type="scientific">Talaromyces stipitatus (strain ATCC 10500 / CBS 375.48 / QM 6759 / NRRL 1006)</name>
    <name type="common">Penicillium stipitatum</name>
    <dbReference type="NCBI Taxonomy" id="441959"/>
    <lineage>
        <taxon>Eukaryota</taxon>
        <taxon>Fungi</taxon>
        <taxon>Dikarya</taxon>
        <taxon>Ascomycota</taxon>
        <taxon>Pezizomycotina</taxon>
        <taxon>Eurotiomycetes</taxon>
        <taxon>Eurotiomycetidae</taxon>
        <taxon>Eurotiales</taxon>
        <taxon>Trichocomaceae</taxon>
        <taxon>Talaromyces</taxon>
        <taxon>Talaromyces sect. Talaromyces</taxon>
    </lineage>
</organism>
<feature type="chain" id="PRO_0000437135" description="Hydrolase tropI">
    <location>
        <begin position="1"/>
        <end position="254"/>
    </location>
</feature>
<feature type="active site" evidence="1">
    <location>
        <position position="141"/>
    </location>
</feature>
<feature type="active site" evidence="1">
    <location>
        <position position="187"/>
    </location>
</feature>
<feature type="active site" evidence="1">
    <location>
        <position position="219"/>
    </location>
</feature>
<name>TROPI_TALSN</name>
<sequence length="254" mass="28201">MASLPSQSCCYQGFRHSGAPKGTLSMVKDIEVYTSYPPDKSTEYGVLILTDIVGHRFSNAQIIADQFAENGYFVMMPDLFLGDAVPLNKPGEFDMGKWRSGAYHPQGKNHLPETVDPIVEVCLSEMRSKYQCKKIGAVGYCFGGKYVVRHLIPGKMDVGYTAHPSHIDESELKGIKGPLAIAAAAKDNIFPAEKRHVSEEILQEVGFPYQINLYSGVSHGFGVRGDMNAGEVRYAMRSAFVQAVEWFNEYMKEK</sequence>
<reference key="1">
    <citation type="journal article" date="2012" name="Proc. Natl. Acad. Sci. U.S.A.">
        <title>Genetic, molecular, and biochemical basis of fungal tropolone biosynthesis.</title>
        <authorList>
            <person name="Davison J."/>
            <person name="al Fahad A."/>
            <person name="Cai M."/>
            <person name="Song Z."/>
            <person name="Yehia S.Y."/>
            <person name="Lazarus C.M."/>
            <person name="Bailey A.M."/>
            <person name="Simpson T.J."/>
            <person name="Cox R.J."/>
        </authorList>
    </citation>
    <scope>NUCLEOTIDE SEQUENCE [GENOMIC DNA]</scope>
    <scope>FUNCTION</scope>
    <source>
        <strain>ATCC 10500 / CBS 375.48 / QM 6759 / NRRL 1006</strain>
    </source>
</reference>
<reference key="2">
    <citation type="journal article" date="2014" name="Angew. Chem. Int. Ed.">
        <title>The biosynthesis and catabolism of the maleic anhydride moiety of stipitatonic acid.</title>
        <authorList>
            <person name="al Fahad A."/>
            <person name="Abood A."/>
            <person name="Simpson T.J."/>
            <person name="Cox R.J."/>
        </authorList>
    </citation>
    <scope>NUCLEOTIDE SEQUENCE [GENOMIC DNA]</scope>
    <scope>FUNCTION</scope>
    <source>
        <strain>ATCC 10500 / CBS 375.48 / QM 6759 / NRRL 1006</strain>
    </source>
</reference>
<reference key="3">
    <citation type="journal article" date="2015" name="Genome Announc.">
        <title>Genome sequence of the AIDS-associated pathogen Penicillium marneffei (ATCC18224) and its near taxonomic relative Talaromyces stipitatus (ATCC10500).</title>
        <authorList>
            <person name="Nierman W.C."/>
            <person name="Fedorova-Abrams N.D."/>
            <person name="Andrianopoulos A."/>
        </authorList>
    </citation>
    <scope>NUCLEOTIDE SEQUENCE [LARGE SCALE GENOMIC DNA]</scope>
    <source>
        <strain>ATCC 10500 / CBS 375.48 / QM 6759 / NRRL 1006</strain>
    </source>
</reference>
<proteinExistence type="inferred from homology"/>
<gene>
    <name evidence="5" type="primary">tropI</name>
    <name evidence="4" type="synonym">tsR1</name>
    <name type="ORF">TSTA_117760</name>
</gene>
<dbReference type="EC" id="3.1.1.-" evidence="3"/>
<dbReference type="EMBL" id="BK008910">
    <property type="protein sequence ID" value="DAA64704.1"/>
    <property type="molecule type" value="Genomic_DNA"/>
</dbReference>
<dbReference type="EMBL" id="EQ962655">
    <property type="protein sequence ID" value="EED18002.1"/>
    <property type="molecule type" value="Genomic_DNA"/>
</dbReference>
<dbReference type="RefSeq" id="XP_002481994.1">
    <property type="nucleotide sequence ID" value="XM_002481949.1"/>
</dbReference>
<dbReference type="SMR" id="B8M9K0"/>
<dbReference type="FunCoup" id="B8M9K0">
    <property type="interactions" value="253"/>
</dbReference>
<dbReference type="STRING" id="441959.B8M9K0"/>
<dbReference type="ESTHER" id="talsn-tropi">
    <property type="family name" value="Dienelactone_hydrolase"/>
</dbReference>
<dbReference type="GeneID" id="8105834"/>
<dbReference type="VEuPathDB" id="FungiDB:TSTA_117760"/>
<dbReference type="eggNOG" id="KOG3043">
    <property type="taxonomic scope" value="Eukaryota"/>
</dbReference>
<dbReference type="InParanoid" id="B8M9K0"/>
<dbReference type="OMA" id="SLCKHCI"/>
<dbReference type="OrthoDB" id="17560at2759"/>
<dbReference type="PhylomeDB" id="B8M9K0"/>
<dbReference type="Proteomes" id="UP000001745">
    <property type="component" value="Unassembled WGS sequence"/>
</dbReference>
<dbReference type="GO" id="GO:0016787">
    <property type="term" value="F:hydrolase activity"/>
    <property type="evidence" value="ECO:0007669"/>
    <property type="project" value="UniProtKB-KW"/>
</dbReference>
<dbReference type="Gene3D" id="3.40.50.1820">
    <property type="entry name" value="alpha/beta hydrolase"/>
    <property type="match status" value="1"/>
</dbReference>
<dbReference type="InterPro" id="IPR029058">
    <property type="entry name" value="AB_hydrolase_fold"/>
</dbReference>
<dbReference type="InterPro" id="IPR002925">
    <property type="entry name" value="Dienelactn_hydro"/>
</dbReference>
<dbReference type="PANTHER" id="PTHR17630">
    <property type="entry name" value="DIENELACTONE HYDROLASE"/>
    <property type="match status" value="1"/>
</dbReference>
<dbReference type="PANTHER" id="PTHR17630:SF44">
    <property type="entry name" value="PROTEIN AIM2"/>
    <property type="match status" value="1"/>
</dbReference>
<dbReference type="Pfam" id="PF01738">
    <property type="entry name" value="DLH"/>
    <property type="match status" value="1"/>
</dbReference>
<dbReference type="SUPFAM" id="SSF53474">
    <property type="entry name" value="alpha/beta-Hydrolases"/>
    <property type="match status" value="1"/>
</dbReference>
<comment type="function">
    <text evidence="2 3">Hydrolase; part of the gene cluster that mediates the biosynthesis of the tropolone class of fungal maleic anhydrides (PubMed:22508998, PubMed:24863423). The pathway begins with the synthesis of 3-methylorcinaldehyde by the non-reducing polyketide synthase (PKS) tropA (PubMed:22508998). 3-methylorcinaldehyde is the substrate for the FAD-dependent monooxygenase tropB to yield a dearomatized hydroxycyclohexadione (PubMed:22508998, PubMed:24863423). The 2-oxoglutarate-dependent dioxygenase tropC then performs the oxidative ring expansion to provide the first tropolone metabolite stipitaldehyde (PubMed:22508998, PubMed:24863423). Trop D converts stipitaldehyde into stipitacetal which is in turn converted to stipitalide by the short-chain dehydrogenase/reductase tropE (PubMed:24863423). The next steps involve tropF, tropG, tropH, tropI and tropJ to form successive tropolone maleic anhydrides including stipitaldehydic, stipitatonic and stipitatic acids (PubMed:24863423).</text>
</comment>
<comment type="pathway">
    <text evidence="3">Secondary metabolite biosynthesis.</text>
</comment>
<comment type="similarity">
    <text evidence="6">Belongs to the dienelactone hydrolase family.</text>
</comment>